<gene>
    <name type="ordered locus">AM1_2283</name>
</gene>
<evidence type="ECO:0000250" key="1"/>
<evidence type="ECO:0000305" key="2"/>
<organism>
    <name type="scientific">Acaryochloris marina (strain MBIC 11017)</name>
    <dbReference type="NCBI Taxonomy" id="329726"/>
    <lineage>
        <taxon>Bacteria</taxon>
        <taxon>Bacillati</taxon>
        <taxon>Cyanobacteriota</taxon>
        <taxon>Cyanophyceae</taxon>
        <taxon>Acaryochloridales</taxon>
        <taxon>Acaryochloridaceae</taxon>
        <taxon>Acaryochloris</taxon>
    </lineage>
</organism>
<feature type="chain" id="PRO_0000342706" description="D-fructose 1,6-bisphosphatase class 2/sedoheptulose 1,7-bisphosphatase 1">
    <location>
        <begin position="1"/>
        <end position="346"/>
    </location>
</feature>
<feature type="binding site" evidence="1">
    <location>
        <position position="33"/>
    </location>
    <ligand>
        <name>Mn(2+)</name>
        <dbReference type="ChEBI" id="CHEBI:29035"/>
        <label>1</label>
    </ligand>
</feature>
<feature type="binding site" evidence="1">
    <location>
        <position position="57"/>
    </location>
    <ligand>
        <name>Mn(2+)</name>
        <dbReference type="ChEBI" id="CHEBI:29035"/>
        <label>1</label>
    </ligand>
</feature>
<feature type="binding site" evidence="1">
    <location>
        <position position="97"/>
    </location>
    <ligand>
        <name>Mn(2+)</name>
        <dbReference type="ChEBI" id="CHEBI:29035"/>
        <label>2</label>
    </ligand>
</feature>
<feature type="binding site" evidence="1">
    <location>
        <begin position="100"/>
        <end position="102"/>
    </location>
    <ligand>
        <name>substrate</name>
    </ligand>
</feature>
<feature type="binding site" evidence="1">
    <location>
        <position position="100"/>
    </location>
    <ligand>
        <name>Mn(2+)</name>
        <dbReference type="ChEBI" id="CHEBI:29035"/>
        <label>2</label>
    </ligand>
</feature>
<feature type="binding site" evidence="1">
    <location>
        <position position="131"/>
    </location>
    <ligand>
        <name>substrate</name>
    </ligand>
</feature>
<feature type="binding site" evidence="1">
    <location>
        <begin position="176"/>
        <end position="178"/>
    </location>
    <ligand>
        <name>substrate</name>
    </ligand>
</feature>
<feature type="binding site" evidence="1">
    <location>
        <begin position="198"/>
        <end position="200"/>
    </location>
    <ligand>
        <name>substrate</name>
    </ligand>
</feature>
<feature type="binding site" evidence="1">
    <location>
        <position position="225"/>
    </location>
    <ligand>
        <name>Mn(2+)</name>
        <dbReference type="ChEBI" id="CHEBI:29035"/>
        <label>2</label>
    </ligand>
</feature>
<name>FBSB1_ACAM1</name>
<comment type="function">
    <text evidence="1">Catalyzes the hydrolysis of fructose 1,6-bisphosphate (Fru 1,6-P2) and sedoheptulose 1,7-bisphosphate (Sed 1,7-P2) to fructose 6-phosphate and sedoheptulose 7-phosphate, respectively.</text>
</comment>
<comment type="catalytic activity">
    <reaction>
        <text>beta-D-fructose 1,6-bisphosphate + H2O = beta-D-fructose 6-phosphate + phosphate</text>
        <dbReference type="Rhea" id="RHEA:11064"/>
        <dbReference type="ChEBI" id="CHEBI:15377"/>
        <dbReference type="ChEBI" id="CHEBI:32966"/>
        <dbReference type="ChEBI" id="CHEBI:43474"/>
        <dbReference type="ChEBI" id="CHEBI:57634"/>
        <dbReference type="EC" id="3.1.3.11"/>
    </reaction>
</comment>
<comment type="catalytic activity">
    <reaction>
        <text>D-sedoheptulose 1,7-bisphosphate + H2O = D-sedoheptulose 7-phosphate + phosphate</text>
        <dbReference type="Rhea" id="RHEA:17461"/>
        <dbReference type="ChEBI" id="CHEBI:15377"/>
        <dbReference type="ChEBI" id="CHEBI:43474"/>
        <dbReference type="ChEBI" id="CHEBI:57483"/>
        <dbReference type="ChEBI" id="CHEBI:58335"/>
        <dbReference type="EC" id="3.1.3.37"/>
    </reaction>
</comment>
<comment type="cofactor">
    <cofactor evidence="1">
        <name>Mn(2+)</name>
        <dbReference type="ChEBI" id="CHEBI:29035"/>
    </cofactor>
</comment>
<comment type="pathway">
    <text>Carbohydrate biosynthesis; Calvin cycle.</text>
</comment>
<comment type="subunit">
    <text evidence="1">Homotetramer.</text>
</comment>
<comment type="similarity">
    <text evidence="2">Belongs to the FBPase class 2 family.</text>
</comment>
<dbReference type="EC" id="3.1.3.11"/>
<dbReference type="EC" id="3.1.3.37"/>
<dbReference type="EMBL" id="CP000828">
    <property type="protein sequence ID" value="ABW27294.1"/>
    <property type="molecule type" value="Genomic_DNA"/>
</dbReference>
<dbReference type="SMR" id="B0C1Z3"/>
<dbReference type="STRING" id="329726.AM1_2283"/>
<dbReference type="KEGG" id="amr:AM1_2283"/>
<dbReference type="eggNOG" id="COG1494">
    <property type="taxonomic scope" value="Bacteria"/>
</dbReference>
<dbReference type="HOGENOM" id="CLU_054938_0_0_3"/>
<dbReference type="OrthoDB" id="9779353at2"/>
<dbReference type="UniPathway" id="UPA00116"/>
<dbReference type="Proteomes" id="UP000000268">
    <property type="component" value="Chromosome"/>
</dbReference>
<dbReference type="GO" id="GO:0005829">
    <property type="term" value="C:cytosol"/>
    <property type="evidence" value="ECO:0007669"/>
    <property type="project" value="TreeGrafter"/>
</dbReference>
<dbReference type="GO" id="GO:0042132">
    <property type="term" value="F:fructose 1,6-bisphosphate 1-phosphatase activity"/>
    <property type="evidence" value="ECO:0007669"/>
    <property type="project" value="UniProtKB-EC"/>
</dbReference>
<dbReference type="GO" id="GO:0046872">
    <property type="term" value="F:metal ion binding"/>
    <property type="evidence" value="ECO:0007669"/>
    <property type="project" value="UniProtKB-KW"/>
</dbReference>
<dbReference type="GO" id="GO:0050278">
    <property type="term" value="F:sedoheptulose-bisphosphatase activity"/>
    <property type="evidence" value="ECO:0007669"/>
    <property type="project" value="UniProtKB-EC"/>
</dbReference>
<dbReference type="GO" id="GO:0030388">
    <property type="term" value="P:fructose 1,6-bisphosphate metabolic process"/>
    <property type="evidence" value="ECO:0007669"/>
    <property type="project" value="TreeGrafter"/>
</dbReference>
<dbReference type="GO" id="GO:0006094">
    <property type="term" value="P:gluconeogenesis"/>
    <property type="evidence" value="ECO:0007669"/>
    <property type="project" value="InterPro"/>
</dbReference>
<dbReference type="GO" id="GO:0006071">
    <property type="term" value="P:glycerol metabolic process"/>
    <property type="evidence" value="ECO:0007669"/>
    <property type="project" value="InterPro"/>
</dbReference>
<dbReference type="GO" id="GO:0019253">
    <property type="term" value="P:reductive pentose-phosphate cycle"/>
    <property type="evidence" value="ECO:0007669"/>
    <property type="project" value="UniProtKB-UniPathway"/>
</dbReference>
<dbReference type="CDD" id="cd01516">
    <property type="entry name" value="FBPase_glpX"/>
    <property type="match status" value="1"/>
</dbReference>
<dbReference type="FunFam" id="3.40.190.90:FF:000001">
    <property type="entry name" value="Fructose-1,6-bisphosphatase"/>
    <property type="match status" value="1"/>
</dbReference>
<dbReference type="Gene3D" id="3.40.190.90">
    <property type="match status" value="1"/>
</dbReference>
<dbReference type="Gene3D" id="3.30.540.10">
    <property type="entry name" value="Fructose-1,6-Bisphosphatase, subunit A, domain 1"/>
    <property type="match status" value="1"/>
</dbReference>
<dbReference type="InterPro" id="IPR004464">
    <property type="entry name" value="FBPase_class-2/SBPase"/>
</dbReference>
<dbReference type="NCBIfam" id="TIGR00330">
    <property type="entry name" value="glpX"/>
    <property type="match status" value="1"/>
</dbReference>
<dbReference type="PANTHER" id="PTHR30447:SF0">
    <property type="entry name" value="FRUCTOSE-1,6-BISPHOSPHATASE 1 CLASS 2-RELATED"/>
    <property type="match status" value="1"/>
</dbReference>
<dbReference type="PANTHER" id="PTHR30447">
    <property type="entry name" value="FRUCTOSE-1,6-BISPHOSPHATASE CLASS 2"/>
    <property type="match status" value="1"/>
</dbReference>
<dbReference type="Pfam" id="PF03320">
    <property type="entry name" value="FBPase_glpX"/>
    <property type="match status" value="1"/>
</dbReference>
<dbReference type="PIRSF" id="PIRSF004532">
    <property type="entry name" value="GlpX"/>
    <property type="match status" value="1"/>
</dbReference>
<dbReference type="SUPFAM" id="SSF56655">
    <property type="entry name" value="Carbohydrate phosphatase"/>
    <property type="match status" value="1"/>
</dbReference>
<sequence>MDNVIGLEIIEVVEQAAIASALWMGKGEKDTADAVAVDAMRNRMNQIHMRGRIVIGEGERDDAPMLYIGEQVGICTQENAAEFCTLDELIEIDIAVDPCEGTNLVAYGQNGSMAVLAISEKGGLFAAPDFYMKKLAAPPAAKGKVDIRKSATENLQIIAECLDRSISELVVVVMKRARHDGLIKEIREAGARVRLIEDGDVSAALSCAFSGTNIHALMGIGAAPEGVISAAAMRALGGHFQGQLIYDPEIVQTGLIGESKESNLARLKEMGIDDPDRIYEAEELACGETVLFAACGITPGTLMKGARFFPGGVRTESLIISTQSKTVRFVDTIHKLDDKHRALQLH</sequence>
<reference key="1">
    <citation type="journal article" date="2008" name="Proc. Natl. Acad. Sci. U.S.A.">
        <title>Niche adaptation and genome expansion in the chlorophyll d-producing cyanobacterium Acaryochloris marina.</title>
        <authorList>
            <person name="Swingley W.D."/>
            <person name="Chen M."/>
            <person name="Cheung P.C."/>
            <person name="Conrad A.L."/>
            <person name="Dejesa L.C."/>
            <person name="Hao J."/>
            <person name="Honchak B.M."/>
            <person name="Karbach L.E."/>
            <person name="Kurdoglu A."/>
            <person name="Lahiri S."/>
            <person name="Mastrian S.D."/>
            <person name="Miyashita H."/>
            <person name="Page L."/>
            <person name="Ramakrishna P."/>
            <person name="Satoh S."/>
            <person name="Sattley W.M."/>
            <person name="Shimada Y."/>
            <person name="Taylor H.L."/>
            <person name="Tomo T."/>
            <person name="Tsuchiya T."/>
            <person name="Wang Z.T."/>
            <person name="Raymond J."/>
            <person name="Mimuro M."/>
            <person name="Blankenship R.E."/>
            <person name="Touchman J.W."/>
        </authorList>
    </citation>
    <scope>NUCLEOTIDE SEQUENCE [LARGE SCALE GENOMIC DNA]</scope>
    <source>
        <strain>MBIC 11017</strain>
    </source>
</reference>
<proteinExistence type="inferred from homology"/>
<keyword id="KW-0113">Calvin cycle</keyword>
<keyword id="KW-0119">Carbohydrate metabolism</keyword>
<keyword id="KW-0378">Hydrolase</keyword>
<keyword id="KW-0464">Manganese</keyword>
<keyword id="KW-0479">Metal-binding</keyword>
<keyword id="KW-1185">Reference proteome</keyword>
<protein>
    <recommendedName>
        <fullName>D-fructose 1,6-bisphosphatase class 2/sedoheptulose 1,7-bisphosphatase 1</fullName>
        <shortName>FBPase class 2/SBPase 1</shortName>
        <ecNumber>3.1.3.11</ecNumber>
        <ecNumber>3.1.3.37</ecNumber>
    </recommendedName>
</protein>
<accession>B0C1Z3</accession>